<organism>
    <name type="scientific">Streptococcus thermophilus (strain CNRZ 1066)</name>
    <dbReference type="NCBI Taxonomy" id="299768"/>
    <lineage>
        <taxon>Bacteria</taxon>
        <taxon>Bacillati</taxon>
        <taxon>Bacillota</taxon>
        <taxon>Bacilli</taxon>
        <taxon>Lactobacillales</taxon>
        <taxon>Streptococcaceae</taxon>
        <taxon>Streptococcus</taxon>
    </lineage>
</organism>
<proteinExistence type="inferred from homology"/>
<sequence>MSKKRLYEIAKEVGVESKVIVAKAQELGLSVKSHSSSVEEADANRITSSLKAGTAKDESKPAPKATPTPKEEKVEPKVDKASVAKSAPAKETSKAEVKEASVALKKPKSRNFKAEREARAKAEAERRKNGGGRDNRNRNQQGNDQGKRHNNDRRNQKGNGQGDHNKGNRDNSTNHDRNFQGKLRNDQNQNNRRDNARNNQAGPRIDLKARAAALKAEQNAEYSRQSETRFREEKAAEQRRAKEQEKARKEKQQAEVAVQKAAAETKPAPKPAPVAPQSAPTAQVQDTRRKKVRPNKSRDNRRVNEDGPKQTRNNKWNNQNQVRNQRNSNWNKNKNKKGKNNRGNSAPKPVTERKFHELPKEFEYTEGMTVAEIAKRIKREPAEIVKKLFMMGVMATQNQSLDGDTIELLMVDYGIEATKKEEVDNADIERFFVDEDYLNKDAMVERAPVVTIMGHVDHGKTTLLDTLRNSRVATGEAGGITQHIGAYQIEEGGKKITFLDTPGHAAFTSMRARGASVTDITVLIVAADDGVMPQTIEAINHSKAAGVPIIVAINKIDKPDANPERVIGELAEHGVISTAWGGDSEFVEISAKFGQNIEELLETILLVAEVEELKADPTVRAIGTVIEARLDKGKGAVATLLVQQGTLNVQDPIVVGNTFGRVRAMTNDLGRRIKTAGPSAPVSITGLNEAPMAGDHFAVYEDEKAARAAGEERAKRALMKQRQQTHRVSLDNLFDTLKAGEMKTVNVIIKADVQGSVEALAASLLKIDVEGVRVNVVHSAVGAINESDITLAEASDAVVIGFNVRPTPQARQQAETDEVEIRLHSIIYKVIEEIEDAMKGMLDPEFEEKIIGEAVIRETFKVSKVGTIGGFMVTNGKITRDSSARVIRDGVVIFDGKLASLKHYKDDVKEVGNAQEGGLTIENYNDIKVDDVIEAYIMEEIKR</sequence>
<evidence type="ECO:0000250" key="1"/>
<evidence type="ECO:0000255" key="2">
    <source>
        <dbReference type="HAMAP-Rule" id="MF_00100"/>
    </source>
</evidence>
<evidence type="ECO:0000256" key="3">
    <source>
        <dbReference type="SAM" id="MobiDB-lite"/>
    </source>
</evidence>
<feature type="chain" id="PRO_0000228251" description="Translation initiation factor IF-2">
    <location>
        <begin position="1"/>
        <end position="943"/>
    </location>
</feature>
<feature type="domain" description="tr-type G">
    <location>
        <begin position="445"/>
        <end position="614"/>
    </location>
</feature>
<feature type="region of interest" description="Disordered" evidence="3">
    <location>
        <begin position="29"/>
        <end position="357"/>
    </location>
</feature>
<feature type="region of interest" description="G1" evidence="1">
    <location>
        <begin position="454"/>
        <end position="461"/>
    </location>
</feature>
<feature type="region of interest" description="G2" evidence="1">
    <location>
        <begin position="479"/>
        <end position="483"/>
    </location>
</feature>
<feature type="region of interest" description="G3" evidence="1">
    <location>
        <begin position="500"/>
        <end position="503"/>
    </location>
</feature>
<feature type="region of interest" description="G4" evidence="1">
    <location>
        <begin position="554"/>
        <end position="557"/>
    </location>
</feature>
<feature type="region of interest" description="G5" evidence="1">
    <location>
        <begin position="590"/>
        <end position="592"/>
    </location>
</feature>
<feature type="compositionally biased region" description="Basic and acidic residues" evidence="3">
    <location>
        <begin position="69"/>
        <end position="82"/>
    </location>
</feature>
<feature type="compositionally biased region" description="Basic and acidic residues" evidence="3">
    <location>
        <begin position="112"/>
        <end position="137"/>
    </location>
</feature>
<feature type="compositionally biased region" description="Basic and acidic residues" evidence="3">
    <location>
        <begin position="145"/>
        <end position="155"/>
    </location>
</feature>
<feature type="compositionally biased region" description="Basic and acidic residues" evidence="3">
    <location>
        <begin position="163"/>
        <end position="196"/>
    </location>
</feature>
<feature type="compositionally biased region" description="Basic and acidic residues" evidence="3">
    <location>
        <begin position="224"/>
        <end position="253"/>
    </location>
</feature>
<feature type="compositionally biased region" description="Low complexity" evidence="3">
    <location>
        <begin position="254"/>
        <end position="266"/>
    </location>
</feature>
<feature type="compositionally biased region" description="Basic and acidic residues" evidence="3">
    <location>
        <begin position="296"/>
        <end position="309"/>
    </location>
</feature>
<feature type="compositionally biased region" description="Low complexity" evidence="3">
    <location>
        <begin position="313"/>
        <end position="332"/>
    </location>
</feature>
<feature type="binding site" evidence="2">
    <location>
        <begin position="454"/>
        <end position="461"/>
    </location>
    <ligand>
        <name>GTP</name>
        <dbReference type="ChEBI" id="CHEBI:37565"/>
    </ligand>
</feature>
<feature type="binding site" evidence="2">
    <location>
        <begin position="500"/>
        <end position="504"/>
    </location>
    <ligand>
        <name>GTP</name>
        <dbReference type="ChEBI" id="CHEBI:37565"/>
    </ligand>
</feature>
<feature type="binding site" evidence="2">
    <location>
        <begin position="554"/>
        <end position="557"/>
    </location>
    <ligand>
        <name>GTP</name>
        <dbReference type="ChEBI" id="CHEBI:37565"/>
    </ligand>
</feature>
<comment type="function">
    <text evidence="2">One of the essential components for the initiation of protein synthesis. Protects formylmethionyl-tRNA from spontaneous hydrolysis and promotes its binding to the 30S ribosomal subunits. Also involved in the hydrolysis of GTP during the formation of the 70S ribosomal complex.</text>
</comment>
<comment type="subcellular location">
    <subcellularLocation>
        <location evidence="2">Cytoplasm</location>
    </subcellularLocation>
</comment>
<comment type="similarity">
    <text evidence="2">Belongs to the TRAFAC class translation factor GTPase superfamily. Classic translation factor GTPase family. IF-2 subfamily.</text>
</comment>
<keyword id="KW-0963">Cytoplasm</keyword>
<keyword id="KW-0342">GTP-binding</keyword>
<keyword id="KW-0396">Initiation factor</keyword>
<keyword id="KW-0547">Nucleotide-binding</keyword>
<keyword id="KW-0648">Protein biosynthesis</keyword>
<accession>Q5M1B9</accession>
<reference key="1">
    <citation type="journal article" date="2004" name="Nat. Biotechnol.">
        <title>Complete sequence and comparative genome analysis of the dairy bacterium Streptococcus thermophilus.</title>
        <authorList>
            <person name="Bolotin A."/>
            <person name="Quinquis B."/>
            <person name="Renault P."/>
            <person name="Sorokin A."/>
            <person name="Ehrlich S.D."/>
            <person name="Kulakauskas S."/>
            <person name="Lapidus A."/>
            <person name="Goltsman E."/>
            <person name="Mazur M."/>
            <person name="Pusch G.D."/>
            <person name="Fonstein M."/>
            <person name="Overbeek R."/>
            <person name="Kyprides N."/>
            <person name="Purnelle B."/>
            <person name="Prozzi D."/>
            <person name="Ngui K."/>
            <person name="Masuy D."/>
            <person name="Hancy F."/>
            <person name="Burteau S."/>
            <person name="Boutry M."/>
            <person name="Delcour J."/>
            <person name="Goffeau A."/>
            <person name="Hols P."/>
        </authorList>
    </citation>
    <scope>NUCLEOTIDE SEQUENCE [LARGE SCALE GENOMIC DNA]</scope>
    <source>
        <strain>CNRZ 1066</strain>
    </source>
</reference>
<dbReference type="EMBL" id="CP000024">
    <property type="protein sequence ID" value="AAV61947.1"/>
    <property type="molecule type" value="Genomic_DNA"/>
</dbReference>
<dbReference type="RefSeq" id="WP_011226879.1">
    <property type="nucleotide sequence ID" value="NC_006449.1"/>
</dbReference>
<dbReference type="SMR" id="Q5M1B9"/>
<dbReference type="KEGG" id="stc:str0344"/>
<dbReference type="HOGENOM" id="CLU_006301_5_0_9"/>
<dbReference type="GO" id="GO:0005829">
    <property type="term" value="C:cytosol"/>
    <property type="evidence" value="ECO:0007669"/>
    <property type="project" value="TreeGrafter"/>
</dbReference>
<dbReference type="GO" id="GO:0005525">
    <property type="term" value="F:GTP binding"/>
    <property type="evidence" value="ECO:0007669"/>
    <property type="project" value="UniProtKB-KW"/>
</dbReference>
<dbReference type="GO" id="GO:0003924">
    <property type="term" value="F:GTPase activity"/>
    <property type="evidence" value="ECO:0007669"/>
    <property type="project" value="UniProtKB-UniRule"/>
</dbReference>
<dbReference type="GO" id="GO:0003743">
    <property type="term" value="F:translation initiation factor activity"/>
    <property type="evidence" value="ECO:0007669"/>
    <property type="project" value="UniProtKB-UniRule"/>
</dbReference>
<dbReference type="CDD" id="cd01887">
    <property type="entry name" value="IF2_eIF5B"/>
    <property type="match status" value="1"/>
</dbReference>
<dbReference type="CDD" id="cd03702">
    <property type="entry name" value="IF2_mtIF2_II"/>
    <property type="match status" value="1"/>
</dbReference>
<dbReference type="CDD" id="cd03692">
    <property type="entry name" value="mtIF2_IVc"/>
    <property type="match status" value="1"/>
</dbReference>
<dbReference type="FunFam" id="2.40.30.10:FF:000007">
    <property type="entry name" value="Translation initiation factor IF-2"/>
    <property type="match status" value="1"/>
</dbReference>
<dbReference type="FunFam" id="2.40.30.10:FF:000008">
    <property type="entry name" value="Translation initiation factor IF-2"/>
    <property type="match status" value="1"/>
</dbReference>
<dbReference type="FunFam" id="3.40.50.10050:FF:000001">
    <property type="entry name" value="Translation initiation factor IF-2"/>
    <property type="match status" value="1"/>
</dbReference>
<dbReference type="FunFam" id="3.40.50.300:FF:000019">
    <property type="entry name" value="Translation initiation factor IF-2"/>
    <property type="match status" value="1"/>
</dbReference>
<dbReference type="Gene3D" id="1.10.10.2480">
    <property type="match status" value="1"/>
</dbReference>
<dbReference type="Gene3D" id="3.40.50.300">
    <property type="entry name" value="P-loop containing nucleotide triphosphate hydrolases"/>
    <property type="match status" value="1"/>
</dbReference>
<dbReference type="Gene3D" id="2.40.30.10">
    <property type="entry name" value="Translation factors"/>
    <property type="match status" value="2"/>
</dbReference>
<dbReference type="Gene3D" id="3.40.50.10050">
    <property type="entry name" value="Translation initiation factor IF- 2, domain 3"/>
    <property type="match status" value="1"/>
</dbReference>
<dbReference type="HAMAP" id="MF_00100_B">
    <property type="entry name" value="IF_2_B"/>
    <property type="match status" value="1"/>
</dbReference>
<dbReference type="InterPro" id="IPR053905">
    <property type="entry name" value="EF-G-like_DII"/>
</dbReference>
<dbReference type="InterPro" id="IPR044145">
    <property type="entry name" value="IF2_II"/>
</dbReference>
<dbReference type="InterPro" id="IPR006847">
    <property type="entry name" value="IF2_N"/>
</dbReference>
<dbReference type="InterPro" id="IPR027417">
    <property type="entry name" value="P-loop_NTPase"/>
</dbReference>
<dbReference type="InterPro" id="IPR005225">
    <property type="entry name" value="Small_GTP-bd"/>
</dbReference>
<dbReference type="InterPro" id="IPR000795">
    <property type="entry name" value="T_Tr_GTP-bd_dom"/>
</dbReference>
<dbReference type="InterPro" id="IPR000178">
    <property type="entry name" value="TF_IF2_bacterial-like"/>
</dbReference>
<dbReference type="InterPro" id="IPR015760">
    <property type="entry name" value="TIF_IF2"/>
</dbReference>
<dbReference type="InterPro" id="IPR023115">
    <property type="entry name" value="TIF_IF2_dom3"/>
</dbReference>
<dbReference type="InterPro" id="IPR036925">
    <property type="entry name" value="TIF_IF2_dom3_sf"/>
</dbReference>
<dbReference type="InterPro" id="IPR009000">
    <property type="entry name" value="Transl_B-barrel_sf"/>
</dbReference>
<dbReference type="NCBIfam" id="TIGR00487">
    <property type="entry name" value="IF-2"/>
    <property type="match status" value="1"/>
</dbReference>
<dbReference type="NCBIfam" id="TIGR00231">
    <property type="entry name" value="small_GTP"/>
    <property type="match status" value="1"/>
</dbReference>
<dbReference type="PANTHER" id="PTHR43381:SF5">
    <property type="entry name" value="TR-TYPE G DOMAIN-CONTAINING PROTEIN"/>
    <property type="match status" value="1"/>
</dbReference>
<dbReference type="PANTHER" id="PTHR43381">
    <property type="entry name" value="TRANSLATION INITIATION FACTOR IF-2-RELATED"/>
    <property type="match status" value="1"/>
</dbReference>
<dbReference type="Pfam" id="PF22042">
    <property type="entry name" value="EF-G_D2"/>
    <property type="match status" value="1"/>
</dbReference>
<dbReference type="Pfam" id="PF00009">
    <property type="entry name" value="GTP_EFTU"/>
    <property type="match status" value="1"/>
</dbReference>
<dbReference type="Pfam" id="PF11987">
    <property type="entry name" value="IF-2"/>
    <property type="match status" value="1"/>
</dbReference>
<dbReference type="Pfam" id="PF04760">
    <property type="entry name" value="IF2_N"/>
    <property type="match status" value="2"/>
</dbReference>
<dbReference type="PRINTS" id="PR00449">
    <property type="entry name" value="RASTRNSFRMNG"/>
</dbReference>
<dbReference type="SUPFAM" id="SSF52156">
    <property type="entry name" value="Initiation factor IF2/eIF5b, domain 3"/>
    <property type="match status" value="1"/>
</dbReference>
<dbReference type="SUPFAM" id="SSF52540">
    <property type="entry name" value="P-loop containing nucleoside triphosphate hydrolases"/>
    <property type="match status" value="1"/>
</dbReference>
<dbReference type="SUPFAM" id="SSF50447">
    <property type="entry name" value="Translation proteins"/>
    <property type="match status" value="2"/>
</dbReference>
<dbReference type="PROSITE" id="PS51722">
    <property type="entry name" value="G_TR_2"/>
    <property type="match status" value="1"/>
</dbReference>
<dbReference type="PROSITE" id="PS01176">
    <property type="entry name" value="IF2"/>
    <property type="match status" value="1"/>
</dbReference>
<protein>
    <recommendedName>
        <fullName evidence="2">Translation initiation factor IF-2</fullName>
    </recommendedName>
</protein>
<gene>
    <name evidence="2" type="primary">infB</name>
    <name type="ordered locus">str0344</name>
</gene>
<name>IF2_STRT1</name>